<keyword id="KW-0433">Leucine-rich repeat</keyword>
<keyword id="KW-0539">Nucleus</keyword>
<keyword id="KW-1185">Reference proteome</keyword>
<keyword id="KW-0677">Repeat</keyword>
<accession>Q32PL1</accession>
<organism>
    <name type="scientific">Danio rerio</name>
    <name type="common">Zebrafish</name>
    <name type="synonym">Brachydanio rerio</name>
    <dbReference type="NCBI Taxonomy" id="7955"/>
    <lineage>
        <taxon>Eukaryota</taxon>
        <taxon>Metazoa</taxon>
        <taxon>Chordata</taxon>
        <taxon>Craniata</taxon>
        <taxon>Vertebrata</taxon>
        <taxon>Euteleostomi</taxon>
        <taxon>Actinopterygii</taxon>
        <taxon>Neopterygii</taxon>
        <taxon>Teleostei</taxon>
        <taxon>Ostariophysi</taxon>
        <taxon>Cypriniformes</taxon>
        <taxon>Danionidae</taxon>
        <taxon>Danioninae</taxon>
        <taxon>Danio</taxon>
    </lineage>
</organism>
<reference key="1">
    <citation type="submission" date="2005-10" db="EMBL/GenBank/DDBJ databases">
        <authorList>
            <consortium name="NIH - Zebrafish Gene Collection (ZGC) project"/>
        </authorList>
    </citation>
    <scope>NUCLEOTIDE SEQUENCE [LARGE SCALE MRNA]</scope>
    <source>
        <tissue>Eye</tissue>
    </source>
</reference>
<gene>
    <name type="primary">ppp1r7</name>
    <name type="synonym">sds22</name>
    <name type="ORF">zgc:123325</name>
</gene>
<sequence>MATLSVGEPQEMEVDRRGESEESGDDETKRKSLNGEVDSLQAPSTVPEESPVDMDTITLDPEEEDVDLVHCRIGKIEGLEVLLKAKTISLRQNLIKRIENLESLVSLRELDLYDNQIRKLENLQALTELEQLDVSFNLLRKIEGLDSLTKVKKLFLLHNKIASIANLDHLTSLQMLELGSNRIRVIENLDSLSSLESLFLGTNKITQLQNLDGLHNLTVLSIQSNRITKLEGLQNLVNLRELYLSHNGIEVMEGLENNKKLSTLDIAANRIKKIENISHLTDLKEFWMNDNQIENWADLDELKNAKGLETVYLERNPLQKDPQYRRKIMLALPSVRQIDATFIRF</sequence>
<evidence type="ECO:0000250" key="1"/>
<evidence type="ECO:0000256" key="2">
    <source>
        <dbReference type="SAM" id="MobiDB-lite"/>
    </source>
</evidence>
<evidence type="ECO:0000305" key="3"/>
<comment type="function">
    <text evidence="1">Regulatory subunit of protein phosphatase 1.</text>
</comment>
<comment type="subcellular location">
    <subcellularLocation>
        <location evidence="1">Nucleus</location>
    </subcellularLocation>
</comment>
<comment type="similarity">
    <text evidence="3">Belongs to the SDS22 family.</text>
</comment>
<protein>
    <recommendedName>
        <fullName>Protein phosphatase 1 regulatory subunit 7</fullName>
    </recommendedName>
    <alternativeName>
        <fullName>Protein phosphatase 1 regulatory subunit 22</fullName>
    </alternativeName>
</protein>
<name>PP1R7_DANRE</name>
<feature type="chain" id="PRO_0000239617" description="Protein phosphatase 1 regulatory subunit 7">
    <location>
        <begin position="1"/>
        <end position="345"/>
    </location>
</feature>
<feature type="repeat" description="LRR 1">
    <location>
        <begin position="62"/>
        <end position="83"/>
    </location>
</feature>
<feature type="repeat" description="LRR 2">
    <location>
        <begin position="84"/>
        <end position="105"/>
    </location>
</feature>
<feature type="repeat" description="LRR 3">
    <location>
        <begin position="106"/>
        <end position="127"/>
    </location>
</feature>
<feature type="repeat" description="LRR 4">
    <location>
        <begin position="128"/>
        <end position="149"/>
    </location>
</feature>
<feature type="repeat" description="LRR 5">
    <location>
        <begin position="150"/>
        <end position="171"/>
    </location>
</feature>
<feature type="repeat" description="LRR 6">
    <location>
        <begin position="172"/>
        <end position="193"/>
    </location>
</feature>
<feature type="repeat" description="LRR 7">
    <location>
        <begin position="194"/>
        <end position="215"/>
    </location>
</feature>
<feature type="repeat" description="LRR 8">
    <location>
        <begin position="216"/>
        <end position="237"/>
    </location>
</feature>
<feature type="repeat" description="LRR 9">
    <location>
        <begin position="238"/>
        <end position="259"/>
    </location>
</feature>
<feature type="repeat" description="LRR 10">
    <location>
        <begin position="260"/>
        <end position="281"/>
    </location>
</feature>
<feature type="repeat" description="LRR 11">
    <location>
        <begin position="282"/>
        <end position="303"/>
    </location>
</feature>
<feature type="domain" description="LRRCT">
    <location>
        <begin position="316"/>
        <end position="345"/>
    </location>
</feature>
<feature type="region of interest" description="Disordered" evidence="2">
    <location>
        <begin position="1"/>
        <end position="53"/>
    </location>
</feature>
<feature type="compositionally biased region" description="Basic and acidic residues" evidence="2">
    <location>
        <begin position="13"/>
        <end position="30"/>
    </location>
</feature>
<dbReference type="EMBL" id="BC108074">
    <property type="protein sequence ID" value="AAI08075.1"/>
    <property type="molecule type" value="mRNA"/>
</dbReference>
<dbReference type="RefSeq" id="NP_001032463.1">
    <property type="nucleotide sequence ID" value="NM_001037386.2"/>
</dbReference>
<dbReference type="SMR" id="Q32PL1"/>
<dbReference type="FunCoup" id="Q32PL1">
    <property type="interactions" value="2036"/>
</dbReference>
<dbReference type="STRING" id="7955.ENSDARP00000025441"/>
<dbReference type="PaxDb" id="7955-ENSDARP00000025441"/>
<dbReference type="Ensembl" id="ENSDART00000022356">
    <property type="protein sequence ID" value="ENSDARP00000025441"/>
    <property type="gene ID" value="ENSDARG00000009740"/>
</dbReference>
<dbReference type="GeneID" id="560323"/>
<dbReference type="KEGG" id="dre:560323"/>
<dbReference type="AGR" id="ZFIN:ZDB-GENE-051113-288"/>
<dbReference type="CTD" id="5510"/>
<dbReference type="ZFIN" id="ZDB-GENE-051113-288">
    <property type="gene designation" value="ppp1r7"/>
</dbReference>
<dbReference type="eggNOG" id="KOG0531">
    <property type="taxonomic scope" value="Eukaryota"/>
</dbReference>
<dbReference type="HOGENOM" id="CLU_044236_1_1_1"/>
<dbReference type="InParanoid" id="Q32PL1"/>
<dbReference type="OMA" id="EVWASYN"/>
<dbReference type="OrthoDB" id="7451790at2759"/>
<dbReference type="PhylomeDB" id="Q32PL1"/>
<dbReference type="TreeFam" id="TF105538"/>
<dbReference type="PRO" id="PR:Q32PL1"/>
<dbReference type="Proteomes" id="UP000000437">
    <property type="component" value="Chromosome 2"/>
</dbReference>
<dbReference type="Bgee" id="ENSDARG00000009740">
    <property type="expression patterns" value="Expressed in early embryo and 35 other cell types or tissues"/>
</dbReference>
<dbReference type="ExpressionAtlas" id="Q32PL1">
    <property type="expression patterns" value="baseline and differential"/>
</dbReference>
<dbReference type="GO" id="GO:0005737">
    <property type="term" value="C:cytoplasm"/>
    <property type="evidence" value="ECO:0000318"/>
    <property type="project" value="GO_Central"/>
</dbReference>
<dbReference type="GO" id="GO:0005634">
    <property type="term" value="C:nucleus"/>
    <property type="evidence" value="ECO:0007669"/>
    <property type="project" value="UniProtKB-SubCell"/>
</dbReference>
<dbReference type="FunFam" id="3.80.10.10:FF:000055">
    <property type="entry name" value="Protein phosphatase 1 regulatory subunit 7"/>
    <property type="match status" value="1"/>
</dbReference>
<dbReference type="FunFam" id="3.80.10.10:FF:000127">
    <property type="entry name" value="protein phosphatase 1 regulatory subunit 7 isoform X2"/>
    <property type="match status" value="1"/>
</dbReference>
<dbReference type="Gene3D" id="3.80.10.10">
    <property type="entry name" value="Ribonuclease Inhibitor"/>
    <property type="match status" value="2"/>
</dbReference>
<dbReference type="InterPro" id="IPR050576">
    <property type="entry name" value="Cilia_flagella_integrity"/>
</dbReference>
<dbReference type="InterPro" id="IPR001611">
    <property type="entry name" value="Leu-rich_rpt"/>
</dbReference>
<dbReference type="InterPro" id="IPR003591">
    <property type="entry name" value="Leu-rich_rpt_typical-subtyp"/>
</dbReference>
<dbReference type="InterPro" id="IPR032675">
    <property type="entry name" value="LRR_dom_sf"/>
</dbReference>
<dbReference type="InterPro" id="IPR003603">
    <property type="entry name" value="U2A'_phosphoprotein32A_C"/>
</dbReference>
<dbReference type="PANTHER" id="PTHR45973:SF23">
    <property type="entry name" value="PROTEIN PHOSPHATASE 1 REGULATORY SUBUNIT 7"/>
    <property type="match status" value="1"/>
</dbReference>
<dbReference type="PANTHER" id="PTHR45973">
    <property type="entry name" value="PROTEIN PHOSPHATASE 1 REGULATORY SUBUNIT SDS22-RELATED"/>
    <property type="match status" value="1"/>
</dbReference>
<dbReference type="Pfam" id="PF14580">
    <property type="entry name" value="LRR_9"/>
    <property type="match status" value="2"/>
</dbReference>
<dbReference type="SMART" id="SM00365">
    <property type="entry name" value="LRR_SD22"/>
    <property type="match status" value="10"/>
</dbReference>
<dbReference type="SMART" id="SM00369">
    <property type="entry name" value="LRR_TYP"/>
    <property type="match status" value="6"/>
</dbReference>
<dbReference type="SMART" id="SM00446">
    <property type="entry name" value="LRRcap"/>
    <property type="match status" value="1"/>
</dbReference>
<dbReference type="SUPFAM" id="SSF52058">
    <property type="entry name" value="L domain-like"/>
    <property type="match status" value="1"/>
</dbReference>
<dbReference type="PROSITE" id="PS51450">
    <property type="entry name" value="LRR"/>
    <property type="match status" value="11"/>
</dbReference>
<proteinExistence type="evidence at transcript level"/>